<gene>
    <name evidence="1" type="primary">hisA</name>
    <name type="ordered locus">Bxeno_A3992</name>
    <name type="ORF">Bxe_A0403</name>
</gene>
<evidence type="ECO:0000255" key="1">
    <source>
        <dbReference type="HAMAP-Rule" id="MF_01014"/>
    </source>
</evidence>
<sequence>MLLIPAIDLKDGQCVRLKQGDMDQATIFSEEPAAMARHWVDRGARRLHLVDLNGAFAGKPKNEDAIRAIIAEVGGEIPVQLGGGIRDLNTIERYLDDGLSYVIIGTAAVKNPGFLQDACTAFGGHIIVGLDAKDGKVATDGWSKLTGHEVADLARKFEDYGCESIIYTDIGRDGMLQGINIEATVRLARAVKIPVIASGGLSNLADIESLCEVEDEGIEGVICGRAIYSGDLDFAAAQTLADRLRESDDA</sequence>
<dbReference type="EC" id="5.3.1.16" evidence="1"/>
<dbReference type="EMBL" id="CP000270">
    <property type="protein sequence ID" value="ABE32530.1"/>
    <property type="molecule type" value="Genomic_DNA"/>
</dbReference>
<dbReference type="RefSeq" id="WP_011489991.1">
    <property type="nucleotide sequence ID" value="NC_007951.1"/>
</dbReference>
<dbReference type="SMR" id="Q13TQ9"/>
<dbReference type="STRING" id="266265.Bxe_A0403"/>
<dbReference type="KEGG" id="bxb:DR64_2573"/>
<dbReference type="KEGG" id="bxe:Bxe_A0403"/>
<dbReference type="PATRIC" id="fig|266265.5.peg.4217"/>
<dbReference type="eggNOG" id="COG0106">
    <property type="taxonomic scope" value="Bacteria"/>
</dbReference>
<dbReference type="OrthoDB" id="9807749at2"/>
<dbReference type="UniPathway" id="UPA00031">
    <property type="reaction ID" value="UER00009"/>
</dbReference>
<dbReference type="Proteomes" id="UP000001817">
    <property type="component" value="Chromosome 1"/>
</dbReference>
<dbReference type="GO" id="GO:0005737">
    <property type="term" value="C:cytoplasm"/>
    <property type="evidence" value="ECO:0007669"/>
    <property type="project" value="UniProtKB-SubCell"/>
</dbReference>
<dbReference type="GO" id="GO:0003949">
    <property type="term" value="F:1-(5-phosphoribosyl)-5-[(5-phosphoribosylamino)methylideneamino]imidazole-4-carboxamide isomerase activity"/>
    <property type="evidence" value="ECO:0007669"/>
    <property type="project" value="UniProtKB-UniRule"/>
</dbReference>
<dbReference type="GO" id="GO:0000105">
    <property type="term" value="P:L-histidine biosynthetic process"/>
    <property type="evidence" value="ECO:0007669"/>
    <property type="project" value="UniProtKB-UniRule"/>
</dbReference>
<dbReference type="GO" id="GO:0000162">
    <property type="term" value="P:L-tryptophan biosynthetic process"/>
    <property type="evidence" value="ECO:0007669"/>
    <property type="project" value="TreeGrafter"/>
</dbReference>
<dbReference type="CDD" id="cd04732">
    <property type="entry name" value="HisA"/>
    <property type="match status" value="1"/>
</dbReference>
<dbReference type="FunFam" id="3.20.20.70:FF:000009">
    <property type="entry name" value="1-(5-phosphoribosyl)-5-[(5-phosphoribosylamino)methylideneamino] imidazole-4-carboxamide isomerase"/>
    <property type="match status" value="1"/>
</dbReference>
<dbReference type="Gene3D" id="3.20.20.70">
    <property type="entry name" value="Aldolase class I"/>
    <property type="match status" value="1"/>
</dbReference>
<dbReference type="HAMAP" id="MF_01014">
    <property type="entry name" value="HisA"/>
    <property type="match status" value="1"/>
</dbReference>
<dbReference type="InterPro" id="IPR013785">
    <property type="entry name" value="Aldolase_TIM"/>
</dbReference>
<dbReference type="InterPro" id="IPR006062">
    <property type="entry name" value="His_biosynth"/>
</dbReference>
<dbReference type="InterPro" id="IPR006063">
    <property type="entry name" value="HisA_bact_arch"/>
</dbReference>
<dbReference type="InterPro" id="IPR044524">
    <property type="entry name" value="Isoase_HisA-like"/>
</dbReference>
<dbReference type="InterPro" id="IPR023016">
    <property type="entry name" value="Isoase_HisA-like_bact"/>
</dbReference>
<dbReference type="InterPro" id="IPR011060">
    <property type="entry name" value="RibuloseP-bd_barrel"/>
</dbReference>
<dbReference type="NCBIfam" id="TIGR00007">
    <property type="entry name" value="1-(5-phosphoribosyl)-5-[(5-phosphoribosylamino)methylideneamino]imidazole-4-carboxamide isomerase"/>
    <property type="match status" value="1"/>
</dbReference>
<dbReference type="NCBIfam" id="NF010112">
    <property type="entry name" value="PRK13585.1"/>
    <property type="match status" value="1"/>
</dbReference>
<dbReference type="PANTHER" id="PTHR43090">
    <property type="entry name" value="1-(5-PHOSPHORIBOSYL)-5-[(5-PHOSPHORIBOSYLAMINO)METHYLIDENEAMINO] IMIDAZOLE-4-CARBOXAMIDE ISOMERASE"/>
    <property type="match status" value="1"/>
</dbReference>
<dbReference type="PANTHER" id="PTHR43090:SF2">
    <property type="entry name" value="1-(5-PHOSPHORIBOSYL)-5-[(5-PHOSPHORIBOSYLAMINO)METHYLIDENEAMINO] IMIDAZOLE-4-CARBOXAMIDE ISOMERASE"/>
    <property type="match status" value="1"/>
</dbReference>
<dbReference type="Pfam" id="PF00977">
    <property type="entry name" value="His_biosynth"/>
    <property type="match status" value="1"/>
</dbReference>
<dbReference type="SUPFAM" id="SSF51366">
    <property type="entry name" value="Ribulose-phoshate binding barrel"/>
    <property type="match status" value="1"/>
</dbReference>
<reference key="1">
    <citation type="journal article" date="2006" name="Proc. Natl. Acad. Sci. U.S.A.">
        <title>Burkholderia xenovorans LB400 harbors a multi-replicon, 9.73-Mbp genome shaped for versatility.</title>
        <authorList>
            <person name="Chain P.S.G."/>
            <person name="Denef V.J."/>
            <person name="Konstantinidis K.T."/>
            <person name="Vergez L.M."/>
            <person name="Agullo L."/>
            <person name="Reyes V.L."/>
            <person name="Hauser L."/>
            <person name="Cordova M."/>
            <person name="Gomez L."/>
            <person name="Gonzalez M."/>
            <person name="Land M."/>
            <person name="Lao V."/>
            <person name="Larimer F."/>
            <person name="LiPuma J.J."/>
            <person name="Mahenthiralingam E."/>
            <person name="Malfatti S.A."/>
            <person name="Marx C.J."/>
            <person name="Parnell J.J."/>
            <person name="Ramette A."/>
            <person name="Richardson P."/>
            <person name="Seeger M."/>
            <person name="Smith D."/>
            <person name="Spilker T."/>
            <person name="Sul W.J."/>
            <person name="Tsoi T.V."/>
            <person name="Ulrich L.E."/>
            <person name="Zhulin I.B."/>
            <person name="Tiedje J.M."/>
        </authorList>
    </citation>
    <scope>NUCLEOTIDE SEQUENCE [LARGE SCALE GENOMIC DNA]</scope>
    <source>
        <strain>LB400</strain>
    </source>
</reference>
<feature type="chain" id="PRO_0000290459" description="1-(5-phosphoribosyl)-5-[(5-phosphoribosylamino)methylideneamino] imidazole-4-carboxamide isomerase">
    <location>
        <begin position="1"/>
        <end position="250"/>
    </location>
</feature>
<feature type="active site" description="Proton acceptor" evidence="1">
    <location>
        <position position="8"/>
    </location>
</feature>
<feature type="active site" description="Proton donor" evidence="1">
    <location>
        <position position="131"/>
    </location>
</feature>
<comment type="catalytic activity">
    <reaction evidence="1">
        <text>1-(5-phospho-beta-D-ribosyl)-5-[(5-phospho-beta-D-ribosylamino)methylideneamino]imidazole-4-carboxamide = 5-[(5-phospho-1-deoxy-D-ribulos-1-ylimino)methylamino]-1-(5-phospho-beta-D-ribosyl)imidazole-4-carboxamide</text>
        <dbReference type="Rhea" id="RHEA:15469"/>
        <dbReference type="ChEBI" id="CHEBI:58435"/>
        <dbReference type="ChEBI" id="CHEBI:58525"/>
        <dbReference type="EC" id="5.3.1.16"/>
    </reaction>
</comment>
<comment type="pathway">
    <text evidence="1">Amino-acid biosynthesis; L-histidine biosynthesis; L-histidine from 5-phospho-alpha-D-ribose 1-diphosphate: step 4/9.</text>
</comment>
<comment type="subcellular location">
    <subcellularLocation>
        <location evidence="1">Cytoplasm</location>
    </subcellularLocation>
</comment>
<comment type="similarity">
    <text evidence="1">Belongs to the HisA/HisF family.</text>
</comment>
<organism>
    <name type="scientific">Paraburkholderia xenovorans (strain LB400)</name>
    <dbReference type="NCBI Taxonomy" id="266265"/>
    <lineage>
        <taxon>Bacteria</taxon>
        <taxon>Pseudomonadati</taxon>
        <taxon>Pseudomonadota</taxon>
        <taxon>Betaproteobacteria</taxon>
        <taxon>Burkholderiales</taxon>
        <taxon>Burkholderiaceae</taxon>
        <taxon>Paraburkholderia</taxon>
    </lineage>
</organism>
<name>HIS4_PARXL</name>
<accession>Q13TQ9</accession>
<proteinExistence type="inferred from homology"/>
<keyword id="KW-0028">Amino-acid biosynthesis</keyword>
<keyword id="KW-0963">Cytoplasm</keyword>
<keyword id="KW-0368">Histidine biosynthesis</keyword>
<keyword id="KW-0413">Isomerase</keyword>
<keyword id="KW-1185">Reference proteome</keyword>
<protein>
    <recommendedName>
        <fullName evidence="1">1-(5-phosphoribosyl)-5-[(5-phosphoribosylamino)methylideneamino] imidazole-4-carboxamide isomerase</fullName>
        <ecNumber evidence="1">5.3.1.16</ecNumber>
    </recommendedName>
    <alternativeName>
        <fullName evidence="1">Phosphoribosylformimino-5-aminoimidazole carboxamide ribotide isomerase</fullName>
    </alternativeName>
</protein>